<protein>
    <recommendedName>
        <fullName>Probable basic-leucine zipper transcription factor F</fullName>
    </recommendedName>
</protein>
<name>BZPF_DICDI</name>
<reference key="1">
    <citation type="journal article" date="2005" name="Nature">
        <title>The genome of the social amoeba Dictyostelium discoideum.</title>
        <authorList>
            <person name="Eichinger L."/>
            <person name="Pachebat J.A."/>
            <person name="Gloeckner G."/>
            <person name="Rajandream M.A."/>
            <person name="Sucgang R."/>
            <person name="Berriman M."/>
            <person name="Song J."/>
            <person name="Olsen R."/>
            <person name="Szafranski K."/>
            <person name="Xu Q."/>
            <person name="Tunggal B."/>
            <person name="Kummerfeld S."/>
            <person name="Madera M."/>
            <person name="Konfortov B.A."/>
            <person name="Rivero F."/>
            <person name="Bankier A.T."/>
            <person name="Lehmann R."/>
            <person name="Hamlin N."/>
            <person name="Davies R."/>
            <person name="Gaudet P."/>
            <person name="Fey P."/>
            <person name="Pilcher K."/>
            <person name="Chen G."/>
            <person name="Saunders D."/>
            <person name="Sodergren E.J."/>
            <person name="Davis P."/>
            <person name="Kerhornou A."/>
            <person name="Nie X."/>
            <person name="Hall N."/>
            <person name="Anjard C."/>
            <person name="Hemphill L."/>
            <person name="Bason N."/>
            <person name="Farbrother P."/>
            <person name="Desany B."/>
            <person name="Just E."/>
            <person name="Morio T."/>
            <person name="Rost R."/>
            <person name="Churcher C.M."/>
            <person name="Cooper J."/>
            <person name="Haydock S."/>
            <person name="van Driessche N."/>
            <person name="Cronin A."/>
            <person name="Goodhead I."/>
            <person name="Muzny D.M."/>
            <person name="Mourier T."/>
            <person name="Pain A."/>
            <person name="Lu M."/>
            <person name="Harper D."/>
            <person name="Lindsay R."/>
            <person name="Hauser H."/>
            <person name="James K.D."/>
            <person name="Quiles M."/>
            <person name="Madan Babu M."/>
            <person name="Saito T."/>
            <person name="Buchrieser C."/>
            <person name="Wardroper A."/>
            <person name="Felder M."/>
            <person name="Thangavelu M."/>
            <person name="Johnson D."/>
            <person name="Knights A."/>
            <person name="Loulseged H."/>
            <person name="Mungall K.L."/>
            <person name="Oliver K."/>
            <person name="Price C."/>
            <person name="Quail M.A."/>
            <person name="Urushihara H."/>
            <person name="Hernandez J."/>
            <person name="Rabbinowitsch E."/>
            <person name="Steffen D."/>
            <person name="Sanders M."/>
            <person name="Ma J."/>
            <person name="Kohara Y."/>
            <person name="Sharp S."/>
            <person name="Simmonds M.N."/>
            <person name="Spiegler S."/>
            <person name="Tivey A."/>
            <person name="Sugano S."/>
            <person name="White B."/>
            <person name="Walker D."/>
            <person name="Woodward J.R."/>
            <person name="Winckler T."/>
            <person name="Tanaka Y."/>
            <person name="Shaulsky G."/>
            <person name="Schleicher M."/>
            <person name="Weinstock G.M."/>
            <person name="Rosenthal A."/>
            <person name="Cox E.C."/>
            <person name="Chisholm R.L."/>
            <person name="Gibbs R.A."/>
            <person name="Loomis W.F."/>
            <person name="Platzer M."/>
            <person name="Kay R.R."/>
            <person name="Williams J.G."/>
            <person name="Dear P.H."/>
            <person name="Noegel A.A."/>
            <person name="Barrell B.G."/>
            <person name="Kuspa A."/>
        </authorList>
    </citation>
    <scope>NUCLEOTIDE SEQUENCE [LARGE SCALE GENOMIC DNA]</scope>
    <source>
        <strain>AX4</strain>
    </source>
</reference>
<reference key="2">
    <citation type="journal article" date="2006" name="Development">
        <title>bZIP transcription factor interactions regulate DIF responses in Dictyostelium.</title>
        <authorList>
            <person name="Huang E."/>
            <person name="Blagg S.L."/>
            <person name="Keller T."/>
            <person name="Katoh M."/>
            <person name="Shaulsky G."/>
            <person name="Thompson C.R.L."/>
        </authorList>
    </citation>
    <scope>IDENTIFICATION</scope>
</reference>
<proteinExistence type="inferred from homology"/>
<feature type="chain" id="PRO_0000384406" description="Probable basic-leucine zipper transcription factor F">
    <location>
        <begin position="1"/>
        <end position="631"/>
    </location>
</feature>
<feature type="domain" description="bZIP" evidence="3">
    <location>
        <begin position="405"/>
        <end position="468"/>
    </location>
</feature>
<feature type="region of interest" description="Disordered" evidence="4">
    <location>
        <begin position="46"/>
        <end position="117"/>
    </location>
</feature>
<feature type="region of interest" description="Disordered" evidence="4">
    <location>
        <begin position="154"/>
        <end position="207"/>
    </location>
</feature>
<feature type="region of interest" description="Disordered" evidence="4">
    <location>
        <begin position="264"/>
        <end position="406"/>
    </location>
</feature>
<feature type="region of interest" description="Basic motif" evidence="3">
    <location>
        <begin position="407"/>
        <end position="427"/>
    </location>
</feature>
<feature type="region of interest" description="Leucine-zipper" evidence="3">
    <location>
        <begin position="433"/>
        <end position="440"/>
    </location>
</feature>
<feature type="region of interest" description="Disordered" evidence="4">
    <location>
        <begin position="546"/>
        <end position="631"/>
    </location>
</feature>
<feature type="coiled-coil region" evidence="2">
    <location>
        <begin position="35"/>
        <end position="62"/>
    </location>
</feature>
<feature type="coiled-coil region" evidence="2">
    <location>
        <begin position="328"/>
        <end position="366"/>
    </location>
</feature>
<feature type="compositionally biased region" description="Low complexity" evidence="4">
    <location>
        <begin position="155"/>
        <end position="206"/>
    </location>
</feature>
<feature type="compositionally biased region" description="Low complexity" evidence="4">
    <location>
        <begin position="271"/>
        <end position="360"/>
    </location>
</feature>
<feature type="compositionally biased region" description="Low complexity" evidence="4">
    <location>
        <begin position="563"/>
        <end position="609"/>
    </location>
</feature>
<feature type="compositionally biased region" description="Low complexity" evidence="4">
    <location>
        <begin position="618"/>
        <end position="631"/>
    </location>
</feature>
<keyword id="KW-0175">Coiled coil</keyword>
<keyword id="KW-0238">DNA-binding</keyword>
<keyword id="KW-0539">Nucleus</keyword>
<keyword id="KW-1185">Reference proteome</keyword>
<keyword id="KW-0804">Transcription</keyword>
<keyword id="KW-0805">Transcription regulation</keyword>
<gene>
    <name type="primary">bzpF</name>
    <name type="ORF">DDB_G0279529</name>
</gene>
<organism>
    <name type="scientific">Dictyostelium discoideum</name>
    <name type="common">Social amoeba</name>
    <dbReference type="NCBI Taxonomy" id="44689"/>
    <lineage>
        <taxon>Eukaryota</taxon>
        <taxon>Amoebozoa</taxon>
        <taxon>Evosea</taxon>
        <taxon>Eumycetozoa</taxon>
        <taxon>Dictyostelia</taxon>
        <taxon>Dictyosteliales</taxon>
        <taxon>Dictyosteliaceae</taxon>
        <taxon>Dictyostelium</taxon>
    </lineage>
</organism>
<dbReference type="EMBL" id="AAFI02000031">
    <property type="protein sequence ID" value="EAL67703.1"/>
    <property type="molecule type" value="Genomic_DNA"/>
</dbReference>
<dbReference type="RefSeq" id="XP_641680.1">
    <property type="nucleotide sequence ID" value="XM_636588.1"/>
</dbReference>
<dbReference type="SMR" id="Q54WN7"/>
<dbReference type="FunCoup" id="Q54WN7">
    <property type="interactions" value="100"/>
</dbReference>
<dbReference type="STRING" id="44689.Q54WN7"/>
<dbReference type="PaxDb" id="44689-DDB0220091"/>
<dbReference type="EnsemblProtists" id="EAL67703">
    <property type="protein sequence ID" value="EAL67703"/>
    <property type="gene ID" value="DDB_G0279529"/>
</dbReference>
<dbReference type="GeneID" id="8622088"/>
<dbReference type="KEGG" id="ddi:DDB_G0279529"/>
<dbReference type="dictyBase" id="DDB_G0279529">
    <property type="gene designation" value="bzpF"/>
</dbReference>
<dbReference type="VEuPathDB" id="AmoebaDB:DDB_G0279529"/>
<dbReference type="eggNOG" id="ENOG502R162">
    <property type="taxonomic scope" value="Eukaryota"/>
</dbReference>
<dbReference type="HOGENOM" id="CLU_433775_0_0_1"/>
<dbReference type="InParanoid" id="Q54WN7"/>
<dbReference type="OMA" id="QLMYLRN"/>
<dbReference type="PRO" id="PR:Q54WN7"/>
<dbReference type="Proteomes" id="UP000002195">
    <property type="component" value="Chromosome 3"/>
</dbReference>
<dbReference type="GO" id="GO:0005634">
    <property type="term" value="C:nucleus"/>
    <property type="evidence" value="ECO:0007669"/>
    <property type="project" value="UniProtKB-SubCell"/>
</dbReference>
<dbReference type="GO" id="GO:0035497">
    <property type="term" value="F:cAMP response element binding"/>
    <property type="evidence" value="ECO:0000314"/>
    <property type="project" value="dictyBase"/>
</dbReference>
<dbReference type="GO" id="GO:0003700">
    <property type="term" value="F:DNA-binding transcription factor activity"/>
    <property type="evidence" value="ECO:0000314"/>
    <property type="project" value="dictyBase"/>
</dbReference>
<dbReference type="GO" id="GO:0031154">
    <property type="term" value="P:culmination involved in sorocarp development"/>
    <property type="evidence" value="ECO:0000270"/>
    <property type="project" value="dictyBase"/>
</dbReference>
<dbReference type="GO" id="GO:0010628">
    <property type="term" value="P:positive regulation of gene expression"/>
    <property type="evidence" value="ECO:0000315"/>
    <property type="project" value="dictyBase"/>
</dbReference>
<dbReference type="GO" id="GO:0010737">
    <property type="term" value="P:protein kinase A signaling"/>
    <property type="evidence" value="ECO:0000270"/>
    <property type="project" value="dictyBase"/>
</dbReference>
<dbReference type="GO" id="GO:0031156">
    <property type="term" value="P:regulation of sorocarp development"/>
    <property type="evidence" value="ECO:0000315"/>
    <property type="project" value="dictyBase"/>
</dbReference>
<dbReference type="GO" id="GO:0031288">
    <property type="term" value="P:sorocarp morphogenesis"/>
    <property type="evidence" value="ECO:0000315"/>
    <property type="project" value="dictyBase"/>
</dbReference>
<dbReference type="CDD" id="cd14704">
    <property type="entry name" value="bZIP_HY5-like"/>
    <property type="match status" value="1"/>
</dbReference>
<dbReference type="Gene3D" id="1.20.5.170">
    <property type="match status" value="1"/>
</dbReference>
<dbReference type="InterPro" id="IPR004827">
    <property type="entry name" value="bZIP"/>
</dbReference>
<dbReference type="InterPro" id="IPR046347">
    <property type="entry name" value="bZIP_sf"/>
</dbReference>
<dbReference type="PANTHER" id="PTHR47416:SF8">
    <property type="entry name" value="BASIC-LEUCINE ZIPPER TRANSCRIPTION FACTOR E-RELATED"/>
    <property type="match status" value="1"/>
</dbReference>
<dbReference type="PANTHER" id="PTHR47416">
    <property type="entry name" value="BASIC-LEUCINE ZIPPER TRANSCRIPTION FACTOR F-RELATED"/>
    <property type="match status" value="1"/>
</dbReference>
<dbReference type="Pfam" id="PF00170">
    <property type="entry name" value="bZIP_1"/>
    <property type="match status" value="1"/>
</dbReference>
<dbReference type="SMART" id="SM00338">
    <property type="entry name" value="BRLZ"/>
    <property type="match status" value="1"/>
</dbReference>
<dbReference type="SUPFAM" id="SSF57959">
    <property type="entry name" value="Leucine zipper domain"/>
    <property type="match status" value="1"/>
</dbReference>
<dbReference type="PROSITE" id="PS50217">
    <property type="entry name" value="BZIP"/>
    <property type="match status" value="1"/>
</dbReference>
<comment type="function">
    <text evidence="1">Probable transcriptional regulator.</text>
</comment>
<comment type="subcellular location">
    <subcellularLocation>
        <location evidence="3">Nucleus</location>
    </subcellularLocation>
</comment>
<comment type="similarity">
    <text evidence="5">Belongs to the bZIP family.</text>
</comment>
<sequence>MSLIEGDSIYNLFQTQDLGIDFASSIVPDSPNKFKKNANVFNNFQQQQQQIQQQNKQSNGLIYNNNNNNNNNNNNNNNNSSSSNNNNNSSSSNNNNNSNNNNQNHNNNNNNQNHNNIQHNNAQSQVYINHNSNGSQQEEQLFSIYLQPEKENELNNSYHDNVNNNNNNNNNNNNNNNNINLNHAQQQQQQHHLPHGQPHNNNNNNQFYQIKNPMEEIYSSNGIVPNQEPNKKVEYMNEPIKQNHYNIVPESIFDVPFGVSSQTMLNVPSTNNANNNNNNNNNNNNNNKNINFKQPIQPNQLIPIPPHSNQNNNISLNNNNSNSNSNPNNNNNNSNNISTQINNLNNNINNQNNQLNGSNNGKKKEEDKSIKKRKFISSTPVKGENGGTTLIPTTDGGFNMDEERHQKRQRRLVKNREAAQLFRQRQKAYIQDLEKKVSDLTGTNSEFRARVELLNSENKLIREQLLYLRNFVTQAVSFSFPKGGSNGTNSPSGVADQFLNSILPPGLNSPLPQGILPAGMNLQNPMIMSAIAEAASKNSTFRQNIQGNLLGTPIPSPQSSLTSNSGNNSPNKPLNNNNNNNNINNNNNNNPSSPNNNLNNNNNISPNSSTSHQVPYLPQNTPPQQSTPNQR</sequence>
<accession>Q54WN7</accession>
<evidence type="ECO:0000250" key="1"/>
<evidence type="ECO:0000255" key="2"/>
<evidence type="ECO:0000255" key="3">
    <source>
        <dbReference type="PROSITE-ProRule" id="PRU00978"/>
    </source>
</evidence>
<evidence type="ECO:0000256" key="4">
    <source>
        <dbReference type="SAM" id="MobiDB-lite"/>
    </source>
</evidence>
<evidence type="ECO:0000305" key="5"/>